<evidence type="ECO:0000250" key="1">
    <source>
        <dbReference type="UniProtKB" id="O75396"/>
    </source>
</evidence>
<evidence type="ECO:0000250" key="2">
    <source>
        <dbReference type="UniProtKB" id="Q4KM74"/>
    </source>
</evidence>
<evidence type="ECO:0000255" key="3"/>
<evidence type="ECO:0000255" key="4">
    <source>
        <dbReference type="PROSITE-ProRule" id="PRU00231"/>
    </source>
</evidence>
<evidence type="ECO:0000255" key="5">
    <source>
        <dbReference type="PROSITE-ProRule" id="PRU00290"/>
    </source>
</evidence>
<evidence type="ECO:0000312" key="6">
    <source>
        <dbReference type="EMBL" id="AAH46043.1"/>
    </source>
</evidence>
<evidence type="ECO:0000312" key="7">
    <source>
        <dbReference type="ZFIN" id="ZDB-GENE-010724-3"/>
    </source>
</evidence>
<comment type="function">
    <text evidence="1 2">SNARE involved in targeting and fusion of ER-derived transport vesicles with the Golgi complex as well as Golgi-derived retrograde transport vesicles with the ER.</text>
</comment>
<comment type="subunit">
    <text evidence="1">Component of 2 distinct SNARE complexes.</text>
</comment>
<comment type="subcellular location">
    <subcellularLocation>
        <location evidence="2">Endoplasmic reticulum membrane</location>
        <topology evidence="2">Single-pass type IV membrane protein</topology>
    </subcellularLocation>
    <subcellularLocation>
        <location evidence="2">Endoplasmic reticulum-Golgi intermediate compartment membrane</location>
    </subcellularLocation>
    <subcellularLocation>
        <location evidence="2">Golgi apparatus</location>
        <location evidence="2">cis-Golgi network membrane</location>
    </subcellularLocation>
    <subcellularLocation>
        <location evidence="2">Golgi apparatus</location>
        <location evidence="2">trans-Golgi network membrane</location>
    </subcellularLocation>
    <subcellularLocation>
        <location evidence="1">Melanosome</location>
    </subcellularLocation>
</comment>
<comment type="similarity">
    <text evidence="3">Belongs to the synaptobrevin family.</text>
</comment>
<gene>
    <name evidence="7" type="primary">sec22ba</name>
    <name evidence="7" type="synonym">sec22l1a</name>
    <name type="ORF">zgc:56278</name>
</gene>
<keyword id="KW-0175">Coiled coil</keyword>
<keyword id="KW-0256">Endoplasmic reticulum</keyword>
<keyword id="KW-0931">ER-Golgi transport</keyword>
<keyword id="KW-0333">Golgi apparatus</keyword>
<keyword id="KW-0472">Membrane</keyword>
<keyword id="KW-0653">Protein transport</keyword>
<keyword id="KW-1185">Reference proteome</keyword>
<keyword id="KW-0812">Transmembrane</keyword>
<keyword id="KW-1133">Transmembrane helix</keyword>
<keyword id="KW-0813">Transport</keyword>
<sequence length="215" mass="24390">MVLQTMIVRVADSLPLAASMQEDEQSGRDLQKYQSQAKQLCRKLNEQSPARCTLEAGKMCFHYVIEKGVCYLALCEAGFPKKLAFAYLEDLEGEFSEQYGAKVPSVSRPYSFIEFDTYIQKTIKSYIDSRARRNLGNINSELHDVQRIMVANIEEVLQRGEALSALDSKASNLSSLSKKYRSDAKYLNTRSTYAKVAAGAVIIITLIIYVRFWWL</sequence>
<name>S22BA_DANRE</name>
<dbReference type="EMBL" id="BC046043">
    <property type="protein sequence ID" value="AAH46043.1"/>
    <property type="molecule type" value="mRNA"/>
</dbReference>
<dbReference type="RefSeq" id="NP_998549.1">
    <property type="nucleotide sequence ID" value="NM_213384.1"/>
</dbReference>
<dbReference type="SMR" id="Q7ZV15"/>
<dbReference type="BioGRID" id="79529">
    <property type="interactions" value="1"/>
</dbReference>
<dbReference type="FunCoup" id="Q7ZV15">
    <property type="interactions" value="1676"/>
</dbReference>
<dbReference type="STRING" id="7955.ENSDARP00000043498"/>
<dbReference type="PaxDb" id="7955-ENSDARP00000043498"/>
<dbReference type="GeneID" id="114464"/>
<dbReference type="KEGG" id="dre:114464"/>
<dbReference type="AGR" id="ZFIN:ZDB-GENE-010724-3"/>
<dbReference type="CTD" id="114464"/>
<dbReference type="ZFIN" id="ZDB-GENE-010724-3">
    <property type="gene designation" value="sec22ba"/>
</dbReference>
<dbReference type="eggNOG" id="KOG0862">
    <property type="taxonomic scope" value="Eukaryota"/>
</dbReference>
<dbReference type="InParanoid" id="Q7ZV15"/>
<dbReference type="OrthoDB" id="1719357at2759"/>
<dbReference type="PhylomeDB" id="Q7ZV15"/>
<dbReference type="ChiTaRS" id="sec22ba">
    <property type="organism name" value="zebrafish"/>
</dbReference>
<dbReference type="PRO" id="PR:Q7ZV15"/>
<dbReference type="Proteomes" id="UP000000437">
    <property type="component" value="Chromosome 2"/>
</dbReference>
<dbReference type="GO" id="GO:0005789">
    <property type="term" value="C:endoplasmic reticulum membrane"/>
    <property type="evidence" value="ECO:0000318"/>
    <property type="project" value="GO_Central"/>
</dbReference>
<dbReference type="GO" id="GO:0033116">
    <property type="term" value="C:endoplasmic reticulum-Golgi intermediate compartment membrane"/>
    <property type="evidence" value="ECO:0007669"/>
    <property type="project" value="UniProtKB-SubCell"/>
</dbReference>
<dbReference type="GO" id="GO:0012507">
    <property type="term" value="C:ER to Golgi transport vesicle membrane"/>
    <property type="evidence" value="ECO:0000318"/>
    <property type="project" value="GO_Central"/>
</dbReference>
<dbReference type="GO" id="GO:0000139">
    <property type="term" value="C:Golgi membrane"/>
    <property type="evidence" value="ECO:0000318"/>
    <property type="project" value="GO_Central"/>
</dbReference>
<dbReference type="GO" id="GO:0042470">
    <property type="term" value="C:melanosome"/>
    <property type="evidence" value="ECO:0007669"/>
    <property type="project" value="UniProtKB-SubCell"/>
</dbReference>
<dbReference type="GO" id="GO:0031201">
    <property type="term" value="C:SNARE complex"/>
    <property type="evidence" value="ECO:0000318"/>
    <property type="project" value="GO_Central"/>
</dbReference>
<dbReference type="GO" id="GO:0005484">
    <property type="term" value="F:SNAP receptor activity"/>
    <property type="evidence" value="ECO:0000318"/>
    <property type="project" value="GO_Central"/>
</dbReference>
<dbReference type="GO" id="GO:0006888">
    <property type="term" value="P:endoplasmic reticulum to Golgi vesicle-mediated transport"/>
    <property type="evidence" value="ECO:0000318"/>
    <property type="project" value="GO_Central"/>
</dbReference>
<dbReference type="GO" id="GO:0015031">
    <property type="term" value="P:protein transport"/>
    <property type="evidence" value="ECO:0007669"/>
    <property type="project" value="UniProtKB-KW"/>
</dbReference>
<dbReference type="GO" id="GO:0006890">
    <property type="term" value="P:retrograde vesicle-mediated transport, Golgi to endoplasmic reticulum"/>
    <property type="evidence" value="ECO:0000318"/>
    <property type="project" value="GO_Central"/>
</dbReference>
<dbReference type="GO" id="GO:0048280">
    <property type="term" value="P:vesicle fusion with Golgi apparatus"/>
    <property type="evidence" value="ECO:0000318"/>
    <property type="project" value="GO_Central"/>
</dbReference>
<dbReference type="CDD" id="cd14824">
    <property type="entry name" value="Longin"/>
    <property type="match status" value="1"/>
</dbReference>
<dbReference type="CDD" id="cd15866">
    <property type="entry name" value="R-SNARE_SEC22"/>
    <property type="match status" value="1"/>
</dbReference>
<dbReference type="FunFam" id="1.20.5.110:FF:000019">
    <property type="entry name" value="Vesicle-trafficking protein SEC22b"/>
    <property type="match status" value="1"/>
</dbReference>
<dbReference type="FunFam" id="3.30.450.50:FF:000004">
    <property type="entry name" value="vesicle-trafficking protein SEC22b"/>
    <property type="match status" value="1"/>
</dbReference>
<dbReference type="Gene3D" id="1.20.5.110">
    <property type="match status" value="1"/>
</dbReference>
<dbReference type="Gene3D" id="3.30.450.50">
    <property type="entry name" value="Longin domain"/>
    <property type="match status" value="1"/>
</dbReference>
<dbReference type="InterPro" id="IPR011012">
    <property type="entry name" value="Longin-like_dom_sf"/>
</dbReference>
<dbReference type="InterPro" id="IPR010908">
    <property type="entry name" value="Longin_dom"/>
</dbReference>
<dbReference type="InterPro" id="IPR044565">
    <property type="entry name" value="Sec22"/>
</dbReference>
<dbReference type="InterPro" id="IPR042855">
    <property type="entry name" value="V_SNARE_CC"/>
</dbReference>
<dbReference type="PANTHER" id="PTHR45837">
    <property type="entry name" value="VESICLE-TRAFFICKING PROTEIN SEC22B"/>
    <property type="match status" value="1"/>
</dbReference>
<dbReference type="Pfam" id="PF13774">
    <property type="entry name" value="Longin"/>
    <property type="match status" value="1"/>
</dbReference>
<dbReference type="Pfam" id="PF00957">
    <property type="entry name" value="Synaptobrevin"/>
    <property type="match status" value="1"/>
</dbReference>
<dbReference type="SMART" id="SM01270">
    <property type="entry name" value="Longin"/>
    <property type="match status" value="1"/>
</dbReference>
<dbReference type="SUPFAM" id="SSF58038">
    <property type="entry name" value="SNARE fusion complex"/>
    <property type="match status" value="1"/>
</dbReference>
<dbReference type="SUPFAM" id="SSF64356">
    <property type="entry name" value="SNARE-like"/>
    <property type="match status" value="1"/>
</dbReference>
<dbReference type="PROSITE" id="PS50859">
    <property type="entry name" value="LONGIN"/>
    <property type="match status" value="1"/>
</dbReference>
<dbReference type="PROSITE" id="PS50892">
    <property type="entry name" value="V_SNARE"/>
    <property type="match status" value="1"/>
</dbReference>
<organism>
    <name type="scientific">Danio rerio</name>
    <name type="common">Zebrafish</name>
    <name type="synonym">Brachydanio rerio</name>
    <dbReference type="NCBI Taxonomy" id="7955"/>
    <lineage>
        <taxon>Eukaryota</taxon>
        <taxon>Metazoa</taxon>
        <taxon>Chordata</taxon>
        <taxon>Craniata</taxon>
        <taxon>Vertebrata</taxon>
        <taxon>Euteleostomi</taxon>
        <taxon>Actinopterygii</taxon>
        <taxon>Neopterygii</taxon>
        <taxon>Teleostei</taxon>
        <taxon>Ostariophysi</taxon>
        <taxon>Cypriniformes</taxon>
        <taxon>Danionidae</taxon>
        <taxon>Danioninae</taxon>
        <taxon>Danio</taxon>
    </lineage>
</organism>
<reference evidence="6" key="1">
    <citation type="submission" date="2003-01" db="EMBL/GenBank/DDBJ databases">
        <authorList>
            <consortium name="NIH - Zebrafish Gene Collection (ZGC) project"/>
        </authorList>
    </citation>
    <scope>NUCLEOTIDE SEQUENCE [LARGE SCALE MRNA]</scope>
    <source>
        <strain>SJD</strain>
    </source>
</reference>
<feature type="chain" id="PRO_0000252243" description="Vesicle-trafficking protein SEC22b-A">
    <location>
        <begin position="1"/>
        <end position="215"/>
    </location>
</feature>
<feature type="topological domain" description="Cytoplasmic" evidence="3">
    <location>
        <begin position="1"/>
        <end position="190"/>
    </location>
</feature>
<feature type="transmembrane region" description="Helical" evidence="3">
    <location>
        <begin position="191"/>
        <end position="213"/>
    </location>
</feature>
<feature type="topological domain" description="Lumenal" evidence="3">
    <location>
        <begin position="214"/>
        <end position="215"/>
    </location>
</feature>
<feature type="domain" description="Longin" evidence="4">
    <location>
        <begin position="6"/>
        <end position="119"/>
    </location>
</feature>
<feature type="domain" description="v-SNARE coiled-coil homology" evidence="5">
    <location>
        <begin position="134"/>
        <end position="194"/>
    </location>
</feature>
<proteinExistence type="evidence at transcript level"/>
<accession>Q7ZV15</accession>
<protein>
    <recommendedName>
        <fullName>Vesicle-trafficking protein SEC22b-A</fullName>
    </recommendedName>
    <alternativeName>
        <fullName>SEC22 vesicle-trafficking protein homolog B-A</fullName>
    </alternativeName>
</protein>